<feature type="chain" id="PRO_0000109759" description="Glutamate 5-kinase">
    <location>
        <begin position="1"/>
        <end position="362"/>
    </location>
</feature>
<feature type="domain" description="PUA" evidence="1">
    <location>
        <begin position="267"/>
        <end position="348"/>
    </location>
</feature>
<feature type="binding site" evidence="1">
    <location>
        <position position="3"/>
    </location>
    <ligand>
        <name>ATP</name>
        <dbReference type="ChEBI" id="CHEBI:30616"/>
    </ligand>
</feature>
<feature type="binding site" evidence="1">
    <location>
        <position position="43"/>
    </location>
    <ligand>
        <name>substrate</name>
    </ligand>
</feature>
<feature type="binding site" evidence="1">
    <location>
        <position position="128"/>
    </location>
    <ligand>
        <name>substrate</name>
    </ligand>
</feature>
<feature type="binding site" evidence="1">
    <location>
        <position position="140"/>
    </location>
    <ligand>
        <name>substrate</name>
    </ligand>
</feature>
<feature type="binding site" evidence="1">
    <location>
        <begin position="160"/>
        <end position="161"/>
    </location>
    <ligand>
        <name>ATP</name>
        <dbReference type="ChEBI" id="CHEBI:30616"/>
    </ligand>
</feature>
<feature type="binding site" evidence="1">
    <location>
        <begin position="202"/>
        <end position="208"/>
    </location>
    <ligand>
        <name>ATP</name>
        <dbReference type="ChEBI" id="CHEBI:30616"/>
    </ligand>
</feature>
<gene>
    <name evidence="1" type="primary">proB</name>
    <name type="ordered locus">XOO2666</name>
</gene>
<accession>Q5GZF1</accession>
<keyword id="KW-0028">Amino-acid biosynthesis</keyword>
<keyword id="KW-0067">ATP-binding</keyword>
<keyword id="KW-0963">Cytoplasm</keyword>
<keyword id="KW-0418">Kinase</keyword>
<keyword id="KW-0547">Nucleotide-binding</keyword>
<keyword id="KW-0641">Proline biosynthesis</keyword>
<keyword id="KW-1185">Reference proteome</keyword>
<keyword id="KW-0808">Transferase</keyword>
<evidence type="ECO:0000255" key="1">
    <source>
        <dbReference type="HAMAP-Rule" id="MF_00456"/>
    </source>
</evidence>
<evidence type="ECO:0000305" key="2"/>
<comment type="function">
    <text evidence="1">Catalyzes the transfer of a phosphate group to glutamate to form L-glutamate 5-phosphate.</text>
</comment>
<comment type="catalytic activity">
    <reaction evidence="1">
        <text>L-glutamate + ATP = L-glutamyl 5-phosphate + ADP</text>
        <dbReference type="Rhea" id="RHEA:14877"/>
        <dbReference type="ChEBI" id="CHEBI:29985"/>
        <dbReference type="ChEBI" id="CHEBI:30616"/>
        <dbReference type="ChEBI" id="CHEBI:58274"/>
        <dbReference type="ChEBI" id="CHEBI:456216"/>
        <dbReference type="EC" id="2.7.2.11"/>
    </reaction>
</comment>
<comment type="pathway">
    <text evidence="1">Amino-acid biosynthesis; L-proline biosynthesis; L-glutamate 5-semialdehyde from L-glutamate: step 1/2.</text>
</comment>
<comment type="subcellular location">
    <subcellularLocation>
        <location evidence="1">Cytoplasm</location>
    </subcellularLocation>
</comment>
<comment type="similarity">
    <text evidence="1">Belongs to the glutamate 5-kinase family.</text>
</comment>
<comment type="sequence caution" evidence="2">
    <conflict type="erroneous initiation">
        <sequence resource="EMBL-CDS" id="AAW75920"/>
    </conflict>
</comment>
<protein>
    <recommendedName>
        <fullName evidence="1">Glutamate 5-kinase</fullName>
        <ecNumber evidence="1">2.7.2.11</ecNumber>
    </recommendedName>
    <alternativeName>
        <fullName evidence="1">Gamma-glutamyl kinase</fullName>
        <shortName evidence="1">GK</shortName>
    </alternativeName>
</protein>
<proteinExistence type="inferred from homology"/>
<name>PROB_XANOR</name>
<reference key="1">
    <citation type="journal article" date="2005" name="Nucleic Acids Res.">
        <title>The genome sequence of Xanthomonas oryzae pathovar oryzae KACC10331, the bacterial blight pathogen of rice.</title>
        <authorList>
            <person name="Lee B.-M."/>
            <person name="Park Y.-J."/>
            <person name="Park D.-S."/>
            <person name="Kang H.-W."/>
            <person name="Kim J.-G."/>
            <person name="Song E.-S."/>
            <person name="Park I.-C."/>
            <person name="Yoon U.-H."/>
            <person name="Hahn J.-H."/>
            <person name="Koo B.-S."/>
            <person name="Lee G.-B."/>
            <person name="Kim H."/>
            <person name="Park H.-S."/>
            <person name="Yoon K.-O."/>
            <person name="Kim J.-H."/>
            <person name="Jung C.-H."/>
            <person name="Koh N.-H."/>
            <person name="Seo J.-S."/>
            <person name="Go S.-J."/>
        </authorList>
    </citation>
    <scope>NUCLEOTIDE SEQUENCE [LARGE SCALE GENOMIC DNA]</scope>
    <source>
        <strain>KACC10331 / KXO85</strain>
    </source>
</reference>
<organism>
    <name type="scientific">Xanthomonas oryzae pv. oryzae (strain KACC10331 / KXO85)</name>
    <dbReference type="NCBI Taxonomy" id="291331"/>
    <lineage>
        <taxon>Bacteria</taxon>
        <taxon>Pseudomonadati</taxon>
        <taxon>Pseudomonadota</taxon>
        <taxon>Gammaproteobacteria</taxon>
        <taxon>Lysobacterales</taxon>
        <taxon>Lysobacteraceae</taxon>
        <taxon>Xanthomonas</taxon>
    </lineage>
</organism>
<sequence length="362" mass="38275">MLKVGSSLLAADGGGLSPRFALGLAQFVSANLAAGRELVIVSSGAVAAGRAILPKAVDVGAPIAARQALAALGQAQLIALWQRFFERPVAQVLLTHDDLRNRRRYLNARATLGELLRLGALPVINENDTVSVDELKLGDNDNLAAIVAALVDADALFIATDIDGLYSADPRSNPLARPLDDVPELTPEVLAMAGGSGSNVGTGGMRTKLEAAAKAGAAGIETYLFNGRSGEVVRALAQDRLRGTRIHAARTRIAARKYWLRHAPVEAGAILVDAGAAMALSDKGASLLPGGVVGAEGDFRRGDMVEIRLRDDEGERCLARGVSQYSAVDIRRIARRHSREIENVLGYSYGENVVHRDDLVLL</sequence>
<dbReference type="EC" id="2.7.2.11" evidence="1"/>
<dbReference type="EMBL" id="AE013598">
    <property type="protein sequence ID" value="AAW75920.1"/>
    <property type="status" value="ALT_INIT"/>
    <property type="molecule type" value="Genomic_DNA"/>
</dbReference>
<dbReference type="SMR" id="Q5GZF1"/>
<dbReference type="STRING" id="291331.XOO2666"/>
<dbReference type="KEGG" id="xoo:XOO2666"/>
<dbReference type="HOGENOM" id="CLU_025400_2_0_6"/>
<dbReference type="UniPathway" id="UPA00098">
    <property type="reaction ID" value="UER00359"/>
</dbReference>
<dbReference type="Proteomes" id="UP000006735">
    <property type="component" value="Chromosome"/>
</dbReference>
<dbReference type="GO" id="GO:0005829">
    <property type="term" value="C:cytosol"/>
    <property type="evidence" value="ECO:0007669"/>
    <property type="project" value="TreeGrafter"/>
</dbReference>
<dbReference type="GO" id="GO:0005524">
    <property type="term" value="F:ATP binding"/>
    <property type="evidence" value="ECO:0007669"/>
    <property type="project" value="UniProtKB-KW"/>
</dbReference>
<dbReference type="GO" id="GO:0004349">
    <property type="term" value="F:glutamate 5-kinase activity"/>
    <property type="evidence" value="ECO:0007669"/>
    <property type="project" value="UniProtKB-UniRule"/>
</dbReference>
<dbReference type="GO" id="GO:0003723">
    <property type="term" value="F:RNA binding"/>
    <property type="evidence" value="ECO:0007669"/>
    <property type="project" value="InterPro"/>
</dbReference>
<dbReference type="GO" id="GO:0055129">
    <property type="term" value="P:L-proline biosynthetic process"/>
    <property type="evidence" value="ECO:0007669"/>
    <property type="project" value="UniProtKB-UniRule"/>
</dbReference>
<dbReference type="CDD" id="cd04242">
    <property type="entry name" value="AAK_G5K_ProB"/>
    <property type="match status" value="1"/>
</dbReference>
<dbReference type="CDD" id="cd21157">
    <property type="entry name" value="PUA_G5K"/>
    <property type="match status" value="1"/>
</dbReference>
<dbReference type="FunFam" id="2.30.130.10:FF:000007">
    <property type="entry name" value="Glutamate 5-kinase"/>
    <property type="match status" value="1"/>
</dbReference>
<dbReference type="FunFam" id="3.40.1160.10:FF:000018">
    <property type="entry name" value="Glutamate 5-kinase"/>
    <property type="match status" value="1"/>
</dbReference>
<dbReference type="Gene3D" id="3.40.1160.10">
    <property type="entry name" value="Acetylglutamate kinase-like"/>
    <property type="match status" value="1"/>
</dbReference>
<dbReference type="Gene3D" id="2.30.130.10">
    <property type="entry name" value="PUA domain"/>
    <property type="match status" value="1"/>
</dbReference>
<dbReference type="HAMAP" id="MF_00456">
    <property type="entry name" value="ProB"/>
    <property type="match status" value="1"/>
</dbReference>
<dbReference type="InterPro" id="IPR036393">
    <property type="entry name" value="AceGlu_kinase-like_sf"/>
</dbReference>
<dbReference type="InterPro" id="IPR001048">
    <property type="entry name" value="Asp/Glu/Uridylate_kinase"/>
</dbReference>
<dbReference type="InterPro" id="IPR041739">
    <property type="entry name" value="G5K_ProB"/>
</dbReference>
<dbReference type="InterPro" id="IPR001057">
    <property type="entry name" value="Glu/AcGlu_kinase"/>
</dbReference>
<dbReference type="InterPro" id="IPR011529">
    <property type="entry name" value="Glu_5kinase"/>
</dbReference>
<dbReference type="InterPro" id="IPR005715">
    <property type="entry name" value="Glu_5kinase/COase_Synthase"/>
</dbReference>
<dbReference type="InterPro" id="IPR019797">
    <property type="entry name" value="Glutamate_5-kinase_CS"/>
</dbReference>
<dbReference type="InterPro" id="IPR002478">
    <property type="entry name" value="PUA"/>
</dbReference>
<dbReference type="InterPro" id="IPR015947">
    <property type="entry name" value="PUA-like_sf"/>
</dbReference>
<dbReference type="InterPro" id="IPR036974">
    <property type="entry name" value="PUA_sf"/>
</dbReference>
<dbReference type="NCBIfam" id="TIGR01027">
    <property type="entry name" value="proB"/>
    <property type="match status" value="1"/>
</dbReference>
<dbReference type="PANTHER" id="PTHR43654">
    <property type="entry name" value="GLUTAMATE 5-KINASE"/>
    <property type="match status" value="1"/>
</dbReference>
<dbReference type="PANTHER" id="PTHR43654:SF1">
    <property type="entry name" value="ISOPENTENYL PHOSPHATE KINASE"/>
    <property type="match status" value="1"/>
</dbReference>
<dbReference type="Pfam" id="PF00696">
    <property type="entry name" value="AA_kinase"/>
    <property type="match status" value="1"/>
</dbReference>
<dbReference type="Pfam" id="PF01472">
    <property type="entry name" value="PUA"/>
    <property type="match status" value="1"/>
</dbReference>
<dbReference type="PIRSF" id="PIRSF000729">
    <property type="entry name" value="GK"/>
    <property type="match status" value="1"/>
</dbReference>
<dbReference type="PRINTS" id="PR00474">
    <property type="entry name" value="GLU5KINASE"/>
</dbReference>
<dbReference type="SMART" id="SM00359">
    <property type="entry name" value="PUA"/>
    <property type="match status" value="1"/>
</dbReference>
<dbReference type="SUPFAM" id="SSF53633">
    <property type="entry name" value="Carbamate kinase-like"/>
    <property type="match status" value="1"/>
</dbReference>
<dbReference type="SUPFAM" id="SSF88697">
    <property type="entry name" value="PUA domain-like"/>
    <property type="match status" value="1"/>
</dbReference>
<dbReference type="PROSITE" id="PS00902">
    <property type="entry name" value="GLUTAMATE_5_KINASE"/>
    <property type="match status" value="1"/>
</dbReference>
<dbReference type="PROSITE" id="PS50890">
    <property type="entry name" value="PUA"/>
    <property type="match status" value="1"/>
</dbReference>